<comment type="function">
    <text evidence="2">Involved in base excision repair of DNA damaged by oxidation or by mutagenic agents. Acts as a DNA glycosylase that recognizes and removes damaged bases. Has a preference for oxidized purines, such as 7,8-dihydro-8-oxoguanine (8-oxoG). Has AP (apurinic/apyrimidinic) lyase activity and introduces nicks in the DNA strand. Cleaves the DNA backbone by beta-delta elimination to generate a single-strand break at the site of the removed base with both 3'- and 5'-phosphates.</text>
</comment>
<comment type="catalytic activity">
    <reaction evidence="2">
        <text>Hydrolysis of DNA containing ring-opened 7-methylguanine residues, releasing 2,6-diamino-4-hydroxy-5-(N-methyl)formamidopyrimidine.</text>
        <dbReference type="EC" id="3.2.2.23"/>
    </reaction>
</comment>
<comment type="catalytic activity">
    <reaction evidence="2">
        <text>2'-deoxyribonucleotide-(2'-deoxyribose 5'-phosphate)-2'-deoxyribonucleotide-DNA = a 3'-end 2'-deoxyribonucleotide-(2,3-dehydro-2,3-deoxyribose 5'-phosphate)-DNA + a 5'-end 5'-phospho-2'-deoxyribonucleoside-DNA + H(+)</text>
        <dbReference type="Rhea" id="RHEA:66592"/>
        <dbReference type="Rhea" id="RHEA-COMP:13180"/>
        <dbReference type="Rhea" id="RHEA-COMP:16897"/>
        <dbReference type="Rhea" id="RHEA-COMP:17067"/>
        <dbReference type="ChEBI" id="CHEBI:15378"/>
        <dbReference type="ChEBI" id="CHEBI:136412"/>
        <dbReference type="ChEBI" id="CHEBI:157695"/>
        <dbReference type="ChEBI" id="CHEBI:167181"/>
        <dbReference type="EC" id="4.2.99.18"/>
    </reaction>
</comment>
<comment type="cofactor">
    <cofactor evidence="2">
        <name>Zn(2+)</name>
        <dbReference type="ChEBI" id="CHEBI:29105"/>
    </cofactor>
    <text evidence="2">Binds 1 zinc ion per subunit.</text>
</comment>
<comment type="subunit">
    <text evidence="2">Monomer.</text>
</comment>
<comment type="similarity">
    <text evidence="2">Belongs to the FPG family.</text>
</comment>
<accession>Q329M2</accession>
<feature type="initiator methionine" description="Removed" evidence="1">
    <location>
        <position position="1"/>
    </location>
</feature>
<feature type="chain" id="PRO_0000228470" description="Formamidopyrimidine-DNA glycosylase">
    <location>
        <begin position="2"/>
        <end position="269"/>
    </location>
</feature>
<feature type="zinc finger region" description="FPG-type" evidence="2">
    <location>
        <begin position="235"/>
        <end position="269"/>
    </location>
</feature>
<feature type="active site" description="Schiff-base intermediate with DNA" evidence="2">
    <location>
        <position position="2"/>
    </location>
</feature>
<feature type="active site" description="Proton donor" evidence="2">
    <location>
        <position position="3"/>
    </location>
</feature>
<feature type="active site" description="Proton donor; for beta-elimination activity" evidence="2">
    <location>
        <position position="57"/>
    </location>
</feature>
<feature type="active site" description="Proton donor; for delta-elimination activity" evidence="2">
    <location>
        <position position="259"/>
    </location>
</feature>
<feature type="binding site" evidence="2">
    <location>
        <position position="90"/>
    </location>
    <ligand>
        <name>DNA</name>
        <dbReference type="ChEBI" id="CHEBI:16991"/>
    </ligand>
</feature>
<feature type="binding site" evidence="2">
    <location>
        <position position="109"/>
    </location>
    <ligand>
        <name>DNA</name>
        <dbReference type="ChEBI" id="CHEBI:16991"/>
    </ligand>
</feature>
<feature type="binding site" evidence="2">
    <location>
        <position position="150"/>
    </location>
    <ligand>
        <name>DNA</name>
        <dbReference type="ChEBI" id="CHEBI:16991"/>
    </ligand>
</feature>
<gene>
    <name evidence="2" type="primary">mutM</name>
    <name evidence="2" type="synonym">fpg</name>
    <name type="ordered locus">SDY_4065</name>
</gene>
<organism>
    <name type="scientific">Shigella dysenteriae serotype 1 (strain Sd197)</name>
    <dbReference type="NCBI Taxonomy" id="300267"/>
    <lineage>
        <taxon>Bacteria</taxon>
        <taxon>Pseudomonadati</taxon>
        <taxon>Pseudomonadota</taxon>
        <taxon>Gammaproteobacteria</taxon>
        <taxon>Enterobacterales</taxon>
        <taxon>Enterobacteriaceae</taxon>
        <taxon>Shigella</taxon>
    </lineage>
</organism>
<protein>
    <recommendedName>
        <fullName evidence="2">Formamidopyrimidine-DNA glycosylase</fullName>
        <shortName evidence="2">Fapy-DNA glycosylase</shortName>
        <ecNumber evidence="2">3.2.2.23</ecNumber>
    </recommendedName>
    <alternativeName>
        <fullName evidence="2">DNA-(apurinic or apyrimidinic site) lyase MutM</fullName>
        <shortName evidence="2">AP lyase MutM</shortName>
        <ecNumber evidence="2">4.2.99.18</ecNumber>
    </alternativeName>
</protein>
<name>FPG_SHIDS</name>
<reference key="1">
    <citation type="journal article" date="2005" name="Nucleic Acids Res.">
        <title>Genome dynamics and diversity of Shigella species, the etiologic agents of bacillary dysentery.</title>
        <authorList>
            <person name="Yang F."/>
            <person name="Yang J."/>
            <person name="Zhang X."/>
            <person name="Chen L."/>
            <person name="Jiang Y."/>
            <person name="Yan Y."/>
            <person name="Tang X."/>
            <person name="Wang J."/>
            <person name="Xiong Z."/>
            <person name="Dong J."/>
            <person name="Xue Y."/>
            <person name="Zhu Y."/>
            <person name="Xu X."/>
            <person name="Sun L."/>
            <person name="Chen S."/>
            <person name="Nie H."/>
            <person name="Peng J."/>
            <person name="Xu J."/>
            <person name="Wang Y."/>
            <person name="Yuan Z."/>
            <person name="Wen Y."/>
            <person name="Yao Z."/>
            <person name="Shen Y."/>
            <person name="Qiang B."/>
            <person name="Hou Y."/>
            <person name="Yu J."/>
            <person name="Jin Q."/>
        </authorList>
    </citation>
    <scope>NUCLEOTIDE SEQUENCE [LARGE SCALE GENOMIC DNA]</scope>
    <source>
        <strain>Sd197</strain>
    </source>
</reference>
<sequence length="269" mass="30162">MPELPEVETSRRGIEPHLVGATILHAVVRNGRLRWPVSEEIYRLSDQPVLSVQRRAKYLLLELPEGWIIIHLGMSGSLRILTEGLPPEKHDHVDLVMSNGKVLRYTDPRRFGAWLWAKELEGHNVLAHLGPEPLSDDFNGEYLHQKCAKKKTAIKPWLMDNKLVVGVGNIYASESLFAAGIHPDRLASSLSLAECELLARVIKAVLLRSIEQGGTTLKDFLQSDGKPGYFAQELQVYGRKGEPCRVCGTPIVATKHAQRATFYCRQCQK</sequence>
<evidence type="ECO:0000250" key="1"/>
<evidence type="ECO:0000255" key="2">
    <source>
        <dbReference type="HAMAP-Rule" id="MF_00103"/>
    </source>
</evidence>
<keyword id="KW-0227">DNA damage</keyword>
<keyword id="KW-0234">DNA repair</keyword>
<keyword id="KW-0238">DNA-binding</keyword>
<keyword id="KW-0326">Glycosidase</keyword>
<keyword id="KW-0378">Hydrolase</keyword>
<keyword id="KW-0456">Lyase</keyword>
<keyword id="KW-0479">Metal-binding</keyword>
<keyword id="KW-0511">Multifunctional enzyme</keyword>
<keyword id="KW-1185">Reference proteome</keyword>
<keyword id="KW-0862">Zinc</keyword>
<keyword id="KW-0863">Zinc-finger</keyword>
<proteinExistence type="inferred from homology"/>
<dbReference type="EC" id="3.2.2.23" evidence="2"/>
<dbReference type="EC" id="4.2.99.18" evidence="2"/>
<dbReference type="EMBL" id="CP000034">
    <property type="protein sequence ID" value="ABB63983.1"/>
    <property type="molecule type" value="Genomic_DNA"/>
</dbReference>
<dbReference type="RefSeq" id="WP_001114551.1">
    <property type="nucleotide sequence ID" value="NC_007606.1"/>
</dbReference>
<dbReference type="RefSeq" id="YP_405474.1">
    <property type="nucleotide sequence ID" value="NC_007606.1"/>
</dbReference>
<dbReference type="SMR" id="Q329M2"/>
<dbReference type="STRING" id="300267.SDY_4065"/>
<dbReference type="EnsemblBacteria" id="ABB63983">
    <property type="protein sequence ID" value="ABB63983"/>
    <property type="gene ID" value="SDY_4065"/>
</dbReference>
<dbReference type="KEGG" id="sdy:SDY_4065"/>
<dbReference type="PATRIC" id="fig|300267.13.peg.4781"/>
<dbReference type="HOGENOM" id="CLU_038423_1_1_6"/>
<dbReference type="Proteomes" id="UP000002716">
    <property type="component" value="Chromosome"/>
</dbReference>
<dbReference type="GO" id="GO:0034039">
    <property type="term" value="F:8-oxo-7,8-dihydroguanine DNA N-glycosylase activity"/>
    <property type="evidence" value="ECO:0007669"/>
    <property type="project" value="TreeGrafter"/>
</dbReference>
<dbReference type="GO" id="GO:0140078">
    <property type="term" value="F:class I DNA-(apurinic or apyrimidinic site) endonuclease activity"/>
    <property type="evidence" value="ECO:0007669"/>
    <property type="project" value="UniProtKB-EC"/>
</dbReference>
<dbReference type="GO" id="GO:0003684">
    <property type="term" value="F:damaged DNA binding"/>
    <property type="evidence" value="ECO:0007669"/>
    <property type="project" value="InterPro"/>
</dbReference>
<dbReference type="GO" id="GO:0008270">
    <property type="term" value="F:zinc ion binding"/>
    <property type="evidence" value="ECO:0007669"/>
    <property type="project" value="UniProtKB-UniRule"/>
</dbReference>
<dbReference type="GO" id="GO:0006284">
    <property type="term" value="P:base-excision repair"/>
    <property type="evidence" value="ECO:0007669"/>
    <property type="project" value="InterPro"/>
</dbReference>
<dbReference type="CDD" id="cd08966">
    <property type="entry name" value="EcFpg-like_N"/>
    <property type="match status" value="1"/>
</dbReference>
<dbReference type="FunFam" id="1.10.8.50:FF:000003">
    <property type="entry name" value="Formamidopyrimidine-DNA glycosylase"/>
    <property type="match status" value="1"/>
</dbReference>
<dbReference type="FunFam" id="3.20.190.10:FF:000001">
    <property type="entry name" value="Formamidopyrimidine-DNA glycosylase"/>
    <property type="match status" value="1"/>
</dbReference>
<dbReference type="Gene3D" id="1.10.8.50">
    <property type="match status" value="1"/>
</dbReference>
<dbReference type="Gene3D" id="3.20.190.10">
    <property type="entry name" value="MutM-like, N-terminal"/>
    <property type="match status" value="1"/>
</dbReference>
<dbReference type="HAMAP" id="MF_00103">
    <property type="entry name" value="Fapy_DNA_glycosyl"/>
    <property type="match status" value="1"/>
</dbReference>
<dbReference type="InterPro" id="IPR015886">
    <property type="entry name" value="DNA_glyclase/AP_lyase_DNA-bd"/>
</dbReference>
<dbReference type="InterPro" id="IPR015887">
    <property type="entry name" value="DNA_glyclase_Znf_dom_DNA_BS"/>
</dbReference>
<dbReference type="InterPro" id="IPR020629">
    <property type="entry name" value="Formamido-pyr_DNA_Glyclase"/>
</dbReference>
<dbReference type="InterPro" id="IPR012319">
    <property type="entry name" value="FPG_cat"/>
</dbReference>
<dbReference type="InterPro" id="IPR035937">
    <property type="entry name" value="MutM-like_N-ter"/>
</dbReference>
<dbReference type="InterPro" id="IPR010979">
    <property type="entry name" value="Ribosomal_uS13-like_H2TH"/>
</dbReference>
<dbReference type="InterPro" id="IPR000214">
    <property type="entry name" value="Znf_DNA_glyclase/AP_lyase"/>
</dbReference>
<dbReference type="InterPro" id="IPR010663">
    <property type="entry name" value="Znf_FPG/IleRS"/>
</dbReference>
<dbReference type="NCBIfam" id="TIGR00577">
    <property type="entry name" value="fpg"/>
    <property type="match status" value="1"/>
</dbReference>
<dbReference type="NCBIfam" id="NF002211">
    <property type="entry name" value="PRK01103.1"/>
    <property type="match status" value="1"/>
</dbReference>
<dbReference type="PANTHER" id="PTHR22993">
    <property type="entry name" value="FORMAMIDOPYRIMIDINE-DNA GLYCOSYLASE"/>
    <property type="match status" value="1"/>
</dbReference>
<dbReference type="PANTHER" id="PTHR22993:SF9">
    <property type="entry name" value="FORMAMIDOPYRIMIDINE-DNA GLYCOSYLASE"/>
    <property type="match status" value="1"/>
</dbReference>
<dbReference type="Pfam" id="PF01149">
    <property type="entry name" value="Fapy_DNA_glyco"/>
    <property type="match status" value="1"/>
</dbReference>
<dbReference type="Pfam" id="PF06831">
    <property type="entry name" value="H2TH"/>
    <property type="match status" value="1"/>
</dbReference>
<dbReference type="Pfam" id="PF06827">
    <property type="entry name" value="zf-FPG_IleRS"/>
    <property type="match status" value="1"/>
</dbReference>
<dbReference type="SMART" id="SM00898">
    <property type="entry name" value="Fapy_DNA_glyco"/>
    <property type="match status" value="1"/>
</dbReference>
<dbReference type="SMART" id="SM01232">
    <property type="entry name" value="H2TH"/>
    <property type="match status" value="1"/>
</dbReference>
<dbReference type="SUPFAM" id="SSF57716">
    <property type="entry name" value="Glucocorticoid receptor-like (DNA-binding domain)"/>
    <property type="match status" value="1"/>
</dbReference>
<dbReference type="SUPFAM" id="SSF81624">
    <property type="entry name" value="N-terminal domain of MutM-like DNA repair proteins"/>
    <property type="match status" value="1"/>
</dbReference>
<dbReference type="SUPFAM" id="SSF46946">
    <property type="entry name" value="S13-like H2TH domain"/>
    <property type="match status" value="1"/>
</dbReference>
<dbReference type="PROSITE" id="PS51068">
    <property type="entry name" value="FPG_CAT"/>
    <property type="match status" value="1"/>
</dbReference>
<dbReference type="PROSITE" id="PS01242">
    <property type="entry name" value="ZF_FPG_1"/>
    <property type="match status" value="1"/>
</dbReference>
<dbReference type="PROSITE" id="PS51066">
    <property type="entry name" value="ZF_FPG_2"/>
    <property type="match status" value="1"/>
</dbReference>